<sequence length="347" mass="37714">MSRHLNVAIVGATGAVGETFLTVLEERNFPIKSLYPLASSRSVGKTVTFRDQELDVLDLAEFDFSKVDLALFSAGGAVSKEYAPKAVAAGCVVVDNTSCFRYEDDIPLVVPGSESSSNRDYTKRGIIANPNCSTIQMVVALKPIYDAVGISRINVATYQSVSGTGKKAISELVAQVGDLLNGRPANVQVYPQQIAFNALPHIDQFEDNGYTREEMKMVWETRKIMEDDSIMVNPTAVRVPVIYGHSEAVHLELKKPLTADDARALLAKAPGVTVVDNLSKASYPTAIKNAVGHDDVFVGRIRQDISHPCGLNLWIVADNIRKGAATNAVQIAEILQREFLLKLSLPQ</sequence>
<dbReference type="EC" id="1.2.1.11" evidence="1"/>
<dbReference type="EMBL" id="AF034213">
    <property type="protein sequence ID" value="AAC46292.1"/>
    <property type="molecule type" value="Genomic_DNA"/>
</dbReference>
<dbReference type="SMR" id="O31219"/>
<dbReference type="STRING" id="91892.BIZ52_10970"/>
<dbReference type="eggNOG" id="COG0136">
    <property type="taxonomic scope" value="Bacteria"/>
</dbReference>
<dbReference type="UniPathway" id="UPA00034">
    <property type="reaction ID" value="UER00016"/>
</dbReference>
<dbReference type="UniPathway" id="UPA00050">
    <property type="reaction ID" value="UER00463"/>
</dbReference>
<dbReference type="UniPathway" id="UPA00051">
    <property type="reaction ID" value="UER00464"/>
</dbReference>
<dbReference type="GO" id="GO:0004073">
    <property type="term" value="F:aspartate-semialdehyde dehydrogenase activity"/>
    <property type="evidence" value="ECO:0007669"/>
    <property type="project" value="UniProtKB-UniRule"/>
</dbReference>
<dbReference type="GO" id="GO:0051287">
    <property type="term" value="F:NAD binding"/>
    <property type="evidence" value="ECO:0007669"/>
    <property type="project" value="InterPro"/>
</dbReference>
<dbReference type="GO" id="GO:0050661">
    <property type="term" value="F:NADP binding"/>
    <property type="evidence" value="ECO:0007669"/>
    <property type="project" value="UniProtKB-UniRule"/>
</dbReference>
<dbReference type="GO" id="GO:0046983">
    <property type="term" value="F:protein dimerization activity"/>
    <property type="evidence" value="ECO:0007669"/>
    <property type="project" value="InterPro"/>
</dbReference>
<dbReference type="GO" id="GO:0071266">
    <property type="term" value="P:'de novo' L-methionine biosynthetic process"/>
    <property type="evidence" value="ECO:0007669"/>
    <property type="project" value="UniProtKB-UniRule"/>
</dbReference>
<dbReference type="GO" id="GO:0019877">
    <property type="term" value="P:diaminopimelate biosynthetic process"/>
    <property type="evidence" value="ECO:0007669"/>
    <property type="project" value="UniProtKB-UniRule"/>
</dbReference>
<dbReference type="GO" id="GO:0009097">
    <property type="term" value="P:isoleucine biosynthetic process"/>
    <property type="evidence" value="ECO:0007669"/>
    <property type="project" value="InterPro"/>
</dbReference>
<dbReference type="GO" id="GO:0009089">
    <property type="term" value="P:lysine biosynthetic process via diaminopimelate"/>
    <property type="evidence" value="ECO:0007669"/>
    <property type="project" value="UniProtKB-UniRule"/>
</dbReference>
<dbReference type="GO" id="GO:0009088">
    <property type="term" value="P:threonine biosynthetic process"/>
    <property type="evidence" value="ECO:0007669"/>
    <property type="project" value="UniProtKB-UniRule"/>
</dbReference>
<dbReference type="CDD" id="cd18131">
    <property type="entry name" value="ASADH_C_bac_euk_like"/>
    <property type="match status" value="1"/>
</dbReference>
<dbReference type="CDD" id="cd02316">
    <property type="entry name" value="VcASADH2_like_N"/>
    <property type="match status" value="1"/>
</dbReference>
<dbReference type="Gene3D" id="3.30.360.10">
    <property type="entry name" value="Dihydrodipicolinate Reductase, domain 2"/>
    <property type="match status" value="1"/>
</dbReference>
<dbReference type="Gene3D" id="3.40.50.720">
    <property type="entry name" value="NAD(P)-binding Rossmann-like Domain"/>
    <property type="match status" value="1"/>
</dbReference>
<dbReference type="HAMAP" id="MF_02121">
    <property type="entry name" value="ASADH"/>
    <property type="match status" value="1"/>
</dbReference>
<dbReference type="InterPro" id="IPR012080">
    <property type="entry name" value="Asp_semialdehyde_DH"/>
</dbReference>
<dbReference type="InterPro" id="IPR005986">
    <property type="entry name" value="Asp_semialdehyde_DH_beta"/>
</dbReference>
<dbReference type="InterPro" id="IPR036291">
    <property type="entry name" value="NAD(P)-bd_dom_sf"/>
</dbReference>
<dbReference type="InterPro" id="IPR000534">
    <property type="entry name" value="Semialdehyde_DH_NAD-bd"/>
</dbReference>
<dbReference type="InterPro" id="IPR012280">
    <property type="entry name" value="Semialdhyde_DH_dimer_dom"/>
</dbReference>
<dbReference type="NCBIfam" id="TIGR01296">
    <property type="entry name" value="asd_B"/>
    <property type="match status" value="1"/>
</dbReference>
<dbReference type="NCBIfam" id="NF004224">
    <property type="entry name" value="PRK05671.1"/>
    <property type="match status" value="1"/>
</dbReference>
<dbReference type="NCBIfam" id="NF005957">
    <property type="entry name" value="PRK08040.1"/>
    <property type="match status" value="1"/>
</dbReference>
<dbReference type="NCBIfam" id="NF011456">
    <property type="entry name" value="PRK14874.1"/>
    <property type="match status" value="1"/>
</dbReference>
<dbReference type="PANTHER" id="PTHR46278:SF2">
    <property type="entry name" value="ASPARTATE-SEMIALDEHYDE DEHYDROGENASE"/>
    <property type="match status" value="1"/>
</dbReference>
<dbReference type="PANTHER" id="PTHR46278">
    <property type="entry name" value="DEHYDROGENASE, PUTATIVE-RELATED"/>
    <property type="match status" value="1"/>
</dbReference>
<dbReference type="Pfam" id="PF01118">
    <property type="entry name" value="Semialdhyde_dh"/>
    <property type="match status" value="1"/>
</dbReference>
<dbReference type="Pfam" id="PF02774">
    <property type="entry name" value="Semialdhyde_dhC"/>
    <property type="match status" value="1"/>
</dbReference>
<dbReference type="PIRSF" id="PIRSF000148">
    <property type="entry name" value="ASA_dh"/>
    <property type="match status" value="1"/>
</dbReference>
<dbReference type="SMART" id="SM00859">
    <property type="entry name" value="Semialdhyde_dh"/>
    <property type="match status" value="1"/>
</dbReference>
<dbReference type="SUPFAM" id="SSF55347">
    <property type="entry name" value="Glyceraldehyde-3-phosphate dehydrogenase-like, C-terminal domain"/>
    <property type="match status" value="1"/>
</dbReference>
<dbReference type="SUPFAM" id="SSF51735">
    <property type="entry name" value="NAD(P)-binding Rossmann-fold domains"/>
    <property type="match status" value="1"/>
</dbReference>
<name>DHAS_LEGPN</name>
<comment type="function">
    <text evidence="1">Catalyzes the NADPH-dependent formation of L-aspartate-semialdehyde (L-ASA) by the reductive dephosphorylation of L-aspartyl-4-phosphate.</text>
</comment>
<comment type="catalytic activity">
    <reaction evidence="1">
        <text>L-aspartate 4-semialdehyde + phosphate + NADP(+) = 4-phospho-L-aspartate + NADPH + H(+)</text>
        <dbReference type="Rhea" id="RHEA:24284"/>
        <dbReference type="ChEBI" id="CHEBI:15378"/>
        <dbReference type="ChEBI" id="CHEBI:43474"/>
        <dbReference type="ChEBI" id="CHEBI:57535"/>
        <dbReference type="ChEBI" id="CHEBI:57783"/>
        <dbReference type="ChEBI" id="CHEBI:58349"/>
        <dbReference type="ChEBI" id="CHEBI:537519"/>
        <dbReference type="EC" id="1.2.1.11"/>
    </reaction>
</comment>
<comment type="pathway">
    <text evidence="1">Amino-acid biosynthesis; L-lysine biosynthesis via DAP pathway; (S)-tetrahydrodipicolinate from L-aspartate: step 2/4.</text>
</comment>
<comment type="pathway">
    <text evidence="1">Amino-acid biosynthesis; L-methionine biosynthesis via de novo pathway; L-homoserine from L-aspartate: step 2/3.</text>
</comment>
<comment type="pathway">
    <text evidence="1">Amino-acid biosynthesis; L-threonine biosynthesis; L-threonine from L-aspartate: step 2/5.</text>
</comment>
<comment type="subunit">
    <text evidence="1">Homodimer.</text>
</comment>
<comment type="similarity">
    <text evidence="1">Belongs to the aspartate-semialdehyde dehydrogenase family.</text>
</comment>
<proteinExistence type="inferred from homology"/>
<protein>
    <recommendedName>
        <fullName evidence="1">Aspartate-semialdehyde dehydrogenase</fullName>
        <shortName evidence="1">ASA dehydrogenase</shortName>
        <shortName evidence="1">ASADH</shortName>
        <ecNumber evidence="1">1.2.1.11</ecNumber>
    </recommendedName>
    <alternativeName>
        <fullName evidence="1">Aspartate-beta-semialdehyde dehydrogenase</fullName>
    </alternativeName>
</protein>
<organism>
    <name type="scientific">Legionella pneumophila</name>
    <dbReference type="NCBI Taxonomy" id="446"/>
    <lineage>
        <taxon>Bacteria</taxon>
        <taxon>Pseudomonadati</taxon>
        <taxon>Pseudomonadota</taxon>
        <taxon>Gammaproteobacteria</taxon>
        <taxon>Legionellales</taxon>
        <taxon>Legionellaceae</taxon>
        <taxon>Legionella</taxon>
    </lineage>
</organism>
<accession>O31219</accession>
<evidence type="ECO:0000255" key="1">
    <source>
        <dbReference type="HAMAP-Rule" id="MF_02121"/>
    </source>
</evidence>
<feature type="chain" id="PRO_0000141378" description="Aspartate-semialdehyde dehydrogenase">
    <location>
        <begin position="1"/>
        <end position="347"/>
    </location>
</feature>
<feature type="active site" description="Acyl-thioester intermediate" evidence="1">
    <location>
        <position position="132"/>
    </location>
</feature>
<feature type="active site" description="Proton acceptor" evidence="1">
    <location>
        <position position="245"/>
    </location>
</feature>
<feature type="binding site" evidence="1">
    <location>
        <begin position="13"/>
        <end position="16"/>
    </location>
    <ligand>
        <name>NADP(+)</name>
        <dbReference type="ChEBI" id="CHEBI:58349"/>
    </ligand>
</feature>
<feature type="binding site" evidence="1">
    <location>
        <begin position="41"/>
        <end position="42"/>
    </location>
    <ligand>
        <name>NADP(+)</name>
        <dbReference type="ChEBI" id="CHEBI:58349"/>
    </ligand>
</feature>
<feature type="binding site" evidence="1">
    <location>
        <position position="101"/>
    </location>
    <ligand>
        <name>phosphate</name>
        <dbReference type="ChEBI" id="CHEBI:43474"/>
    </ligand>
</feature>
<feature type="binding site" evidence="1">
    <location>
        <position position="159"/>
    </location>
    <ligand>
        <name>substrate</name>
    </ligand>
</feature>
<feature type="binding site" evidence="1">
    <location>
        <begin position="162"/>
        <end position="163"/>
    </location>
    <ligand>
        <name>NADP(+)</name>
        <dbReference type="ChEBI" id="CHEBI:58349"/>
    </ligand>
</feature>
<feature type="binding site" evidence="1">
    <location>
        <position position="216"/>
    </location>
    <ligand>
        <name>phosphate</name>
        <dbReference type="ChEBI" id="CHEBI:43474"/>
    </ligand>
</feature>
<feature type="binding site" evidence="1">
    <location>
        <position position="238"/>
    </location>
    <ligand>
        <name>substrate</name>
    </ligand>
</feature>
<feature type="binding site" evidence="1">
    <location>
        <position position="319"/>
    </location>
    <ligand>
        <name>NADP(+)</name>
        <dbReference type="ChEBI" id="CHEBI:58349"/>
    </ligand>
</feature>
<keyword id="KW-0028">Amino-acid biosynthesis</keyword>
<keyword id="KW-0220">Diaminopimelate biosynthesis</keyword>
<keyword id="KW-0457">Lysine biosynthesis</keyword>
<keyword id="KW-0486">Methionine biosynthesis</keyword>
<keyword id="KW-0521">NADP</keyword>
<keyword id="KW-0560">Oxidoreductase</keyword>
<keyword id="KW-0791">Threonine biosynthesis</keyword>
<gene>
    <name evidence="1" type="primary">asd</name>
</gene>
<reference key="1">
    <citation type="journal article" date="1998" name="Infect. Immun.">
        <title>Identification of the aspartate-beta-semialdehyde dehydrogenase gene of Legionella pneumophila and characterization of a null mutant.</title>
        <authorList>
            <person name="Harb O.S."/>
            <person name="Abu Kwaik Y."/>
        </authorList>
    </citation>
    <scope>NUCLEOTIDE SEQUENCE [GENOMIC DNA]</scope>
    <source>
        <strain>AA100 / Serogroup 1</strain>
    </source>
</reference>